<accession>Q8U006</accession>
<comment type="similarity">
    <text evidence="1">Belongs to the SUI1 family.</text>
</comment>
<feature type="chain" id="PRO_0000130589" description="Protein translation factor SUI1 homolog">
    <location>
        <begin position="1"/>
        <end position="98"/>
    </location>
</feature>
<reference key="1">
    <citation type="journal article" date="1999" name="Genetics">
        <title>Divergence of the hyperthermophilic archaea Pyrococcus furiosus and P. horikoshii inferred from complete genomic sequences.</title>
        <authorList>
            <person name="Maeder D.L."/>
            <person name="Weiss R.B."/>
            <person name="Dunn D.M."/>
            <person name="Cherry J.L."/>
            <person name="Gonzalez J.M."/>
            <person name="DiRuggiero J."/>
            <person name="Robb F.T."/>
        </authorList>
    </citation>
    <scope>NUCLEOTIDE SEQUENCE [LARGE SCALE GENOMIC DNA]</scope>
    <source>
        <strain>ATCC 43587 / DSM 3638 / JCM 8422 / Vc1</strain>
    </source>
</reference>
<name>SUI1_PYRFU</name>
<dbReference type="EMBL" id="AE009950">
    <property type="protein sequence ID" value="AAL81941.1"/>
    <property type="molecule type" value="Genomic_DNA"/>
</dbReference>
<dbReference type="SMR" id="Q8U006"/>
<dbReference type="STRING" id="186497.PF1817"/>
<dbReference type="PaxDb" id="186497-PF1817"/>
<dbReference type="KEGG" id="pfu:PF1817"/>
<dbReference type="PATRIC" id="fig|186497.12.peg.1888"/>
<dbReference type="eggNOG" id="arCOG04223">
    <property type="taxonomic scope" value="Archaea"/>
</dbReference>
<dbReference type="HOGENOM" id="CLU_082805_6_1_2"/>
<dbReference type="PhylomeDB" id="Q8U006"/>
<dbReference type="Proteomes" id="UP000001013">
    <property type="component" value="Chromosome"/>
</dbReference>
<dbReference type="GO" id="GO:0003729">
    <property type="term" value="F:mRNA binding"/>
    <property type="evidence" value="ECO:0007669"/>
    <property type="project" value="TreeGrafter"/>
</dbReference>
<dbReference type="GO" id="GO:0003743">
    <property type="term" value="F:translation initiation factor activity"/>
    <property type="evidence" value="ECO:0007669"/>
    <property type="project" value="InterPro"/>
</dbReference>
<dbReference type="GO" id="GO:0001731">
    <property type="term" value="P:formation of translation preinitiation complex"/>
    <property type="evidence" value="ECO:0007669"/>
    <property type="project" value="TreeGrafter"/>
</dbReference>
<dbReference type="GO" id="GO:0006417">
    <property type="term" value="P:regulation of translation"/>
    <property type="evidence" value="ECO:0007669"/>
    <property type="project" value="UniProtKB-UniRule"/>
</dbReference>
<dbReference type="GO" id="GO:0002188">
    <property type="term" value="P:translation reinitiation"/>
    <property type="evidence" value="ECO:0007669"/>
    <property type="project" value="TreeGrafter"/>
</dbReference>
<dbReference type="CDD" id="cd11567">
    <property type="entry name" value="YciH_like"/>
    <property type="match status" value="1"/>
</dbReference>
<dbReference type="FunFam" id="3.30.780.10:FF:000006">
    <property type="entry name" value="Protein translation factor SUI1 homolog"/>
    <property type="match status" value="1"/>
</dbReference>
<dbReference type="Gene3D" id="3.30.780.10">
    <property type="entry name" value="SUI1-like domain"/>
    <property type="match status" value="1"/>
</dbReference>
<dbReference type="HAMAP" id="MF_00604">
    <property type="entry name" value="SUI1"/>
    <property type="match status" value="1"/>
</dbReference>
<dbReference type="InterPro" id="IPR050318">
    <property type="entry name" value="DENR/SUI1_TIF"/>
</dbReference>
<dbReference type="InterPro" id="IPR001950">
    <property type="entry name" value="SUI1"/>
</dbReference>
<dbReference type="InterPro" id="IPR022851">
    <property type="entry name" value="SUI1_arc"/>
</dbReference>
<dbReference type="InterPro" id="IPR005872">
    <property type="entry name" value="SUI1_arc_bac"/>
</dbReference>
<dbReference type="InterPro" id="IPR036877">
    <property type="entry name" value="SUI1_dom_sf"/>
</dbReference>
<dbReference type="NCBIfam" id="NF002096">
    <property type="entry name" value="PRK00939.1"/>
    <property type="match status" value="1"/>
</dbReference>
<dbReference type="NCBIfam" id="TIGR01158">
    <property type="entry name" value="SUI1_rel"/>
    <property type="match status" value="1"/>
</dbReference>
<dbReference type="PANTHER" id="PTHR12789:SF0">
    <property type="entry name" value="DENSITY-REGULATED PROTEIN"/>
    <property type="match status" value="1"/>
</dbReference>
<dbReference type="PANTHER" id="PTHR12789">
    <property type="entry name" value="DENSITY-REGULATED PROTEIN HOMOLOG"/>
    <property type="match status" value="1"/>
</dbReference>
<dbReference type="Pfam" id="PF01253">
    <property type="entry name" value="SUI1"/>
    <property type="match status" value="1"/>
</dbReference>
<dbReference type="PIRSF" id="PIRSF037511">
    <property type="entry name" value="Transl_init_SUI1_pro"/>
    <property type="match status" value="1"/>
</dbReference>
<dbReference type="SUPFAM" id="SSF55159">
    <property type="entry name" value="eIF1-like"/>
    <property type="match status" value="1"/>
</dbReference>
<dbReference type="PROSITE" id="PS50296">
    <property type="entry name" value="SUI1"/>
    <property type="match status" value="1"/>
</dbReference>
<evidence type="ECO:0000255" key="1">
    <source>
        <dbReference type="HAMAP-Rule" id="MF_00604"/>
    </source>
</evidence>
<proteinExistence type="inferred from homology"/>
<gene>
    <name type="ordered locus">PF1817</name>
</gene>
<sequence length="98" mass="11412">MPRIVNPLDEMLFKEVLKEQQRIRVYTERARYGKIKTIIEGIDEKEFDLEEIAKKLKAKLACGGTAKNGRIELQGDHRDRIKKLLVELGFSEELIEVE</sequence>
<keyword id="KW-0648">Protein biosynthesis</keyword>
<keyword id="KW-1185">Reference proteome</keyword>
<keyword id="KW-0810">Translation regulation</keyword>
<protein>
    <recommendedName>
        <fullName evidence="1">Protein translation factor SUI1 homolog</fullName>
    </recommendedName>
</protein>
<organism>
    <name type="scientific">Pyrococcus furiosus (strain ATCC 43587 / DSM 3638 / JCM 8422 / Vc1)</name>
    <dbReference type="NCBI Taxonomy" id="186497"/>
    <lineage>
        <taxon>Archaea</taxon>
        <taxon>Methanobacteriati</taxon>
        <taxon>Methanobacteriota</taxon>
        <taxon>Thermococci</taxon>
        <taxon>Thermococcales</taxon>
        <taxon>Thermococcaceae</taxon>
        <taxon>Pyrococcus</taxon>
    </lineage>
</organism>